<proteinExistence type="inferred from homology"/>
<name>ACP_SALA4</name>
<comment type="function">
    <text evidence="1">Carrier of the growing fatty acid chain in fatty acid biosynthesis.</text>
</comment>
<comment type="pathway">
    <text evidence="1">Lipid metabolism; fatty acid biosynthesis.</text>
</comment>
<comment type="subcellular location">
    <subcellularLocation>
        <location evidence="1">Cytoplasm</location>
    </subcellularLocation>
</comment>
<comment type="PTM">
    <text evidence="1">4'-phosphopantetheine is transferred from CoA to a specific serine of apo-ACP by AcpS. This modification is essential for activity because fatty acids are bound in thioester linkage to the sulfhydryl of the prosthetic group.</text>
</comment>
<comment type="similarity">
    <text evidence="1">Belongs to the acyl carrier protein (ACP) family.</text>
</comment>
<reference key="1">
    <citation type="journal article" date="2011" name="J. Bacteriol.">
        <title>Comparative genomics of 28 Salmonella enterica isolates: evidence for CRISPR-mediated adaptive sublineage evolution.</title>
        <authorList>
            <person name="Fricke W.F."/>
            <person name="Mammel M.K."/>
            <person name="McDermott P.F."/>
            <person name="Tartera C."/>
            <person name="White D.G."/>
            <person name="Leclerc J.E."/>
            <person name="Ravel J."/>
            <person name="Cebula T.A."/>
        </authorList>
    </citation>
    <scope>NUCLEOTIDE SEQUENCE [LARGE SCALE GENOMIC DNA]</scope>
    <source>
        <strain>SL483</strain>
    </source>
</reference>
<organism>
    <name type="scientific">Salmonella agona (strain SL483)</name>
    <dbReference type="NCBI Taxonomy" id="454166"/>
    <lineage>
        <taxon>Bacteria</taxon>
        <taxon>Pseudomonadati</taxon>
        <taxon>Pseudomonadota</taxon>
        <taxon>Gammaproteobacteria</taxon>
        <taxon>Enterobacterales</taxon>
        <taxon>Enterobacteriaceae</taxon>
        <taxon>Salmonella</taxon>
    </lineage>
</organism>
<dbReference type="EMBL" id="CP001138">
    <property type="protein sequence ID" value="ACH50506.1"/>
    <property type="molecule type" value="Genomic_DNA"/>
</dbReference>
<dbReference type="RefSeq" id="WP_000103754.1">
    <property type="nucleotide sequence ID" value="NC_011149.1"/>
</dbReference>
<dbReference type="SMR" id="B5F911"/>
<dbReference type="GeneID" id="98387866"/>
<dbReference type="KEGG" id="sea:SeAg_B1990"/>
<dbReference type="HOGENOM" id="CLU_108696_5_1_6"/>
<dbReference type="UniPathway" id="UPA00094"/>
<dbReference type="Proteomes" id="UP000008819">
    <property type="component" value="Chromosome"/>
</dbReference>
<dbReference type="GO" id="GO:0005829">
    <property type="term" value="C:cytosol"/>
    <property type="evidence" value="ECO:0007669"/>
    <property type="project" value="TreeGrafter"/>
</dbReference>
<dbReference type="GO" id="GO:0016020">
    <property type="term" value="C:membrane"/>
    <property type="evidence" value="ECO:0007669"/>
    <property type="project" value="GOC"/>
</dbReference>
<dbReference type="GO" id="GO:0000035">
    <property type="term" value="F:acyl binding"/>
    <property type="evidence" value="ECO:0007669"/>
    <property type="project" value="TreeGrafter"/>
</dbReference>
<dbReference type="GO" id="GO:0000036">
    <property type="term" value="F:acyl carrier activity"/>
    <property type="evidence" value="ECO:0007669"/>
    <property type="project" value="UniProtKB-UniRule"/>
</dbReference>
<dbReference type="GO" id="GO:0009245">
    <property type="term" value="P:lipid A biosynthetic process"/>
    <property type="evidence" value="ECO:0007669"/>
    <property type="project" value="TreeGrafter"/>
</dbReference>
<dbReference type="FunFam" id="1.10.1200.10:FF:000001">
    <property type="entry name" value="Acyl carrier protein"/>
    <property type="match status" value="1"/>
</dbReference>
<dbReference type="Gene3D" id="1.10.1200.10">
    <property type="entry name" value="ACP-like"/>
    <property type="match status" value="1"/>
</dbReference>
<dbReference type="HAMAP" id="MF_01217">
    <property type="entry name" value="Acyl_carrier"/>
    <property type="match status" value="1"/>
</dbReference>
<dbReference type="InterPro" id="IPR003231">
    <property type="entry name" value="ACP"/>
</dbReference>
<dbReference type="InterPro" id="IPR036736">
    <property type="entry name" value="ACP-like_sf"/>
</dbReference>
<dbReference type="InterPro" id="IPR009081">
    <property type="entry name" value="PP-bd_ACP"/>
</dbReference>
<dbReference type="InterPro" id="IPR006162">
    <property type="entry name" value="Ppantetheine_attach_site"/>
</dbReference>
<dbReference type="NCBIfam" id="TIGR00517">
    <property type="entry name" value="acyl_carrier"/>
    <property type="match status" value="1"/>
</dbReference>
<dbReference type="NCBIfam" id="NF002148">
    <property type="entry name" value="PRK00982.1-2"/>
    <property type="match status" value="1"/>
</dbReference>
<dbReference type="NCBIfam" id="NF002149">
    <property type="entry name" value="PRK00982.1-3"/>
    <property type="match status" value="1"/>
</dbReference>
<dbReference type="NCBIfam" id="NF002150">
    <property type="entry name" value="PRK00982.1-4"/>
    <property type="match status" value="1"/>
</dbReference>
<dbReference type="NCBIfam" id="NF002151">
    <property type="entry name" value="PRK00982.1-5"/>
    <property type="match status" value="1"/>
</dbReference>
<dbReference type="PANTHER" id="PTHR20863">
    <property type="entry name" value="ACYL CARRIER PROTEIN"/>
    <property type="match status" value="1"/>
</dbReference>
<dbReference type="PANTHER" id="PTHR20863:SF76">
    <property type="entry name" value="CARRIER DOMAIN-CONTAINING PROTEIN"/>
    <property type="match status" value="1"/>
</dbReference>
<dbReference type="Pfam" id="PF00550">
    <property type="entry name" value="PP-binding"/>
    <property type="match status" value="1"/>
</dbReference>
<dbReference type="SUPFAM" id="SSF47336">
    <property type="entry name" value="ACP-like"/>
    <property type="match status" value="1"/>
</dbReference>
<dbReference type="PROSITE" id="PS50075">
    <property type="entry name" value="CARRIER"/>
    <property type="match status" value="1"/>
</dbReference>
<dbReference type="PROSITE" id="PS00012">
    <property type="entry name" value="PHOSPHOPANTETHEINE"/>
    <property type="match status" value="1"/>
</dbReference>
<evidence type="ECO:0000255" key="1">
    <source>
        <dbReference type="HAMAP-Rule" id="MF_01217"/>
    </source>
</evidence>
<evidence type="ECO:0000255" key="2">
    <source>
        <dbReference type="PROSITE-ProRule" id="PRU00258"/>
    </source>
</evidence>
<accession>B5F911</accession>
<feature type="chain" id="PRO_1000139060" description="Acyl carrier protein">
    <location>
        <begin position="1"/>
        <end position="78"/>
    </location>
</feature>
<feature type="domain" description="Carrier" evidence="2">
    <location>
        <begin position="2"/>
        <end position="77"/>
    </location>
</feature>
<feature type="modified residue" description="O-(pantetheine 4'-phosphoryl)serine" evidence="2">
    <location>
        <position position="37"/>
    </location>
</feature>
<gene>
    <name evidence="1" type="primary">acpP</name>
    <name type="ordered locus">SeAg_B1990</name>
</gene>
<protein>
    <recommendedName>
        <fullName evidence="1">Acyl carrier protein</fullName>
        <shortName evidence="1">ACP</shortName>
    </recommendedName>
</protein>
<keyword id="KW-0963">Cytoplasm</keyword>
<keyword id="KW-0275">Fatty acid biosynthesis</keyword>
<keyword id="KW-0276">Fatty acid metabolism</keyword>
<keyword id="KW-0444">Lipid biosynthesis</keyword>
<keyword id="KW-0443">Lipid metabolism</keyword>
<keyword id="KW-0596">Phosphopantetheine</keyword>
<keyword id="KW-0597">Phosphoprotein</keyword>
<sequence>MSTIEERVKKIIGEQLGVKQEEVTNNASFVEDLGADSLDTVELVMALEEEFDTEIPDEEAEKITTVQAAIDYINGHQA</sequence>